<comment type="function">
    <text evidence="1">Catalyzes the conversion of 2-hydroxypentadienoic acid (enolic form of 2-oxopent-4-enoate) to 4-hydroxy-2-ketopentanoic acid.</text>
</comment>
<comment type="catalytic activity">
    <reaction evidence="1">
        <text>(S)-4-hydroxy-2-oxopentanoate = (2Z)-2-hydroxypenta-2,4-dienoate + H2O</text>
        <dbReference type="Rhea" id="RHEA:22580"/>
        <dbReference type="ChEBI" id="CHEBI:15377"/>
        <dbReference type="ChEBI" id="CHEBI:67152"/>
        <dbReference type="ChEBI" id="CHEBI:73143"/>
        <dbReference type="EC" id="4.2.1.80"/>
    </reaction>
</comment>
<comment type="cofactor">
    <cofactor evidence="1">
        <name>a divalent metal cation</name>
        <dbReference type="ChEBI" id="CHEBI:60240"/>
    </cofactor>
</comment>
<comment type="pathway">
    <text evidence="1">Aromatic compound metabolism; 3-phenylpropanoate degradation.</text>
</comment>
<comment type="similarity">
    <text evidence="1">Belongs to the hydratase/decarboxylase family. MhpD subfamily.</text>
</comment>
<evidence type="ECO:0000255" key="1">
    <source>
        <dbReference type="HAMAP-Rule" id="MF_01655"/>
    </source>
</evidence>
<protein>
    <recommendedName>
        <fullName evidence="1">2-keto-4-pentenoate hydratase</fullName>
        <ecNumber evidence="1">4.2.1.80</ecNumber>
    </recommendedName>
    <alternativeName>
        <fullName evidence="1">2-hydroxypentadienoic acid hydratase</fullName>
    </alternativeName>
</protein>
<organism>
    <name type="scientific">Paraburkholderia xenovorans (strain LB400)</name>
    <dbReference type="NCBI Taxonomy" id="266265"/>
    <lineage>
        <taxon>Bacteria</taxon>
        <taxon>Pseudomonadati</taxon>
        <taxon>Pseudomonadota</taxon>
        <taxon>Betaproteobacteria</taxon>
        <taxon>Burkholderiales</taxon>
        <taxon>Burkholderiaceae</taxon>
        <taxon>Paraburkholderia</taxon>
    </lineage>
</organism>
<sequence>MTPQQREEAAQSLYQAMQSGKPIAPLRDTFPDMNVDDAYAIQSINTQRRISLGRRVVGRKIGLTSVVVQQQLGVDEPDFGALFDDMSFGDAETIPLSILHQPKVEAEIGFVLGRDLDTEQPTHQEVLQAVDYVVPALEIVGSRIADWNIKFVDTVADNASSGVYVLGSTPISPRGLDLSLVGMCLSRRGEPVSTGAGAACLGTPLNAVVWLARTMSRLGKPLRAGELILSGALGPMVAVKPGDVFECHINGVGSVRTEFESNQMNGVAA</sequence>
<reference key="1">
    <citation type="journal article" date="2006" name="Proc. Natl. Acad. Sci. U.S.A.">
        <title>Burkholderia xenovorans LB400 harbors a multi-replicon, 9.73-Mbp genome shaped for versatility.</title>
        <authorList>
            <person name="Chain P.S.G."/>
            <person name="Denef V.J."/>
            <person name="Konstantinidis K.T."/>
            <person name="Vergez L.M."/>
            <person name="Agullo L."/>
            <person name="Reyes V.L."/>
            <person name="Hauser L."/>
            <person name="Cordova M."/>
            <person name="Gomez L."/>
            <person name="Gonzalez M."/>
            <person name="Land M."/>
            <person name="Lao V."/>
            <person name="Larimer F."/>
            <person name="LiPuma J.J."/>
            <person name="Mahenthiralingam E."/>
            <person name="Malfatti S.A."/>
            <person name="Marx C.J."/>
            <person name="Parnell J.J."/>
            <person name="Ramette A."/>
            <person name="Richardson P."/>
            <person name="Seeger M."/>
            <person name="Smith D."/>
            <person name="Spilker T."/>
            <person name="Sul W.J."/>
            <person name="Tsoi T.V."/>
            <person name="Ulrich L.E."/>
            <person name="Zhulin I.B."/>
            <person name="Tiedje J.M."/>
        </authorList>
    </citation>
    <scope>NUCLEOTIDE SEQUENCE [LARGE SCALE GENOMIC DNA]</scope>
    <source>
        <strain>LB400</strain>
    </source>
</reference>
<name>MHPD_PARXL</name>
<accession>Q13VU0</accession>
<gene>
    <name evidence="1" type="primary">mhpD</name>
    <name type="ordered locus">Bxeno_A3261</name>
    <name type="ORF">Bxe_A1149</name>
</gene>
<dbReference type="EC" id="4.2.1.80" evidence="1"/>
<dbReference type="EMBL" id="CP000270">
    <property type="protein sequence ID" value="ABE31799.1"/>
    <property type="molecule type" value="Genomic_DNA"/>
</dbReference>
<dbReference type="RefSeq" id="WP_011489336.1">
    <property type="nucleotide sequence ID" value="NZ_CP008760.1"/>
</dbReference>
<dbReference type="SMR" id="Q13VU0"/>
<dbReference type="STRING" id="266265.Bxe_A1149"/>
<dbReference type="KEGG" id="bxb:DR64_3308"/>
<dbReference type="KEGG" id="bxe:Bxe_A1149"/>
<dbReference type="eggNOG" id="COG3971">
    <property type="taxonomic scope" value="Bacteria"/>
</dbReference>
<dbReference type="OrthoDB" id="9792137at2"/>
<dbReference type="SABIO-RK" id="Q13VU0"/>
<dbReference type="UniPathway" id="UPA00714"/>
<dbReference type="Proteomes" id="UP000001817">
    <property type="component" value="Chromosome 1"/>
</dbReference>
<dbReference type="GO" id="GO:0005737">
    <property type="term" value="C:cytoplasm"/>
    <property type="evidence" value="ECO:0007669"/>
    <property type="project" value="TreeGrafter"/>
</dbReference>
<dbReference type="GO" id="GO:0008684">
    <property type="term" value="F:2-oxopent-4-enoate hydratase activity"/>
    <property type="evidence" value="ECO:0007669"/>
    <property type="project" value="UniProtKB-UniRule"/>
</dbReference>
<dbReference type="GO" id="GO:0030145">
    <property type="term" value="F:manganese ion binding"/>
    <property type="evidence" value="ECO:0007669"/>
    <property type="project" value="InterPro"/>
</dbReference>
<dbReference type="GO" id="GO:0019380">
    <property type="term" value="P:3-phenylpropionate catabolic process"/>
    <property type="evidence" value="ECO:0007669"/>
    <property type="project" value="UniProtKB-UniRule"/>
</dbReference>
<dbReference type="Gene3D" id="3.90.850.10">
    <property type="entry name" value="Fumarylacetoacetase-like, C-terminal domain"/>
    <property type="match status" value="1"/>
</dbReference>
<dbReference type="HAMAP" id="MF_01655">
    <property type="entry name" value="MhpD"/>
    <property type="match status" value="1"/>
</dbReference>
<dbReference type="InterPro" id="IPR011234">
    <property type="entry name" value="Fumarylacetoacetase-like_C"/>
</dbReference>
<dbReference type="InterPro" id="IPR036663">
    <property type="entry name" value="Fumarylacetoacetase_C_sf"/>
</dbReference>
<dbReference type="InterPro" id="IPR050772">
    <property type="entry name" value="Hydratase-Decarb/MhpD_sf"/>
</dbReference>
<dbReference type="InterPro" id="IPR023793">
    <property type="entry name" value="Keto_pentenoate-hydratase"/>
</dbReference>
<dbReference type="NCBIfam" id="NF008461">
    <property type="entry name" value="PRK11342.1"/>
    <property type="match status" value="1"/>
</dbReference>
<dbReference type="PANTHER" id="PTHR30143:SF0">
    <property type="entry name" value="2-KETO-4-PENTENOATE HYDRATASE"/>
    <property type="match status" value="1"/>
</dbReference>
<dbReference type="PANTHER" id="PTHR30143">
    <property type="entry name" value="ACID HYDRATASE"/>
    <property type="match status" value="1"/>
</dbReference>
<dbReference type="Pfam" id="PF01557">
    <property type="entry name" value="FAA_hydrolase"/>
    <property type="match status" value="1"/>
</dbReference>
<dbReference type="SUPFAM" id="SSF56529">
    <property type="entry name" value="FAH"/>
    <property type="match status" value="1"/>
</dbReference>
<proteinExistence type="inferred from homology"/>
<feature type="chain" id="PRO_0000337789" description="2-keto-4-pentenoate hydratase">
    <location>
        <begin position="1"/>
        <end position="269"/>
    </location>
</feature>
<keyword id="KW-0058">Aromatic hydrocarbons catabolism</keyword>
<keyword id="KW-0456">Lyase</keyword>
<keyword id="KW-1185">Reference proteome</keyword>